<comment type="function">
    <text>Serves as a receptor for ospA protein of B.burgdorferi, the Lyme disease agent. Required for spirochetal colonization. Essential for pathogen adherence to the vector.</text>
</comment>
<comment type="subunit">
    <text>Interacts with ospA protein from B.burgdorferi.</text>
</comment>
<comment type="subcellular location">
    <subcellularLocation>
        <location>Cell membrane</location>
    </subcellularLocation>
    <text>Predominantly found in the cell membrane. May be an integral membrane or secreted. However, no clear transmembrane domain or signal sequence are predicted by sequence analysis tools.</text>
</comment>
<comment type="tissue specificity">
    <text>Specifically expressed in gut. Localizes predominantly in the intercellular spaces and luminal surface of the gut. In the gut, it localizes along tight junctions. Not expressed in salivary gland or hemolymph.</text>
</comment>
<comment type="developmental stage">
    <text>Expressed in larvae, nymphs and at lower level in adults.</text>
</comment>
<comment type="induction">
    <text>Increases following spirochete infestation and decreases in response to engorgement, events that are temporally linked to B.burgdorferi entry into and egress from the vector.</text>
</comment>
<comment type="PTM">
    <text>Glycosylated.</text>
</comment>
<reference key="1">
    <citation type="journal article" date="2004" name="Cell">
        <title>TROSPA, an Ixodes scapularis receptor for Borrelia burgdorferi.</title>
        <authorList>
            <person name="Pal U."/>
            <person name="Li X."/>
            <person name="Wang T."/>
            <person name="Montgomery R.R."/>
            <person name="Ramamoorthi N."/>
            <person name="Desilva A.M."/>
            <person name="Bao F."/>
            <person name="Yang X."/>
            <person name="Pypaert M."/>
            <person name="Pradhan D."/>
            <person name="Kantor F.S."/>
            <person name="Telford S."/>
            <person name="Anderson J.F."/>
            <person name="Fikrig E."/>
        </authorList>
    </citation>
    <scope>NUCLEOTIDE SEQUENCE [GENOMIC DNA / MRNA]</scope>
</reference>
<gene>
    <name type="primary">TROSPA</name>
</gene>
<keyword id="KW-1003">Cell membrane</keyword>
<keyword id="KW-0325">Glycoprotein</keyword>
<keyword id="KW-0472">Membrane</keyword>
<keyword id="KW-1185">Reference proteome</keyword>
<protein>
    <recommendedName>
        <fullName>Tick receptor for ospA</fullName>
    </recommendedName>
</protein>
<accession>Q5SDL7</accession>
<accession>Q5SGK2</accession>
<name>TROPA_IXOSC</name>
<feature type="chain" id="PRO_0000065637" description="Tick receptor for ospA">
    <location>
        <begin position="1"/>
        <end position="161"/>
    </location>
</feature>
<feature type="sequence conflict" description="In Ref. 1; AAV33389." evidence="1" ref="1">
    <original>E</original>
    <variation>V</variation>
    <location>
        <position position="35"/>
    </location>
</feature>
<feature type="sequence conflict" description="In Ref. 1; AAV33389." evidence="1" ref="1">
    <original>V</original>
    <variation>E</variation>
    <location>
        <position position="38"/>
    </location>
</feature>
<feature type="sequence conflict" description="In Ref. 1; AAV33389." evidence="1" ref="1">
    <original>A</original>
    <variation>G</variation>
    <location>
        <position position="93"/>
    </location>
</feature>
<feature type="sequence conflict" description="In Ref. 1; AAV33389." evidence="1" ref="1">
    <original>S</original>
    <variation>L</variation>
    <location>
        <position position="96"/>
    </location>
</feature>
<sequence>MVAMEAMAAMEVMVAAMAATADTVASSAASATATEATVAMDTASLSLPLQLSPRSLPQSSLSATAATVATDTVVSSADTEVSDTEDSAATVSATASLSMLPQSSPRSLPQSSLSATAATVDSVTDMADTAMDTKQFISKGNEHFFAASYLCAWADQSAAGS</sequence>
<proteinExistence type="evidence at transcript level"/>
<organism>
    <name type="scientific">Ixodes scapularis</name>
    <name type="common">Black-legged tick</name>
    <name type="synonym">Deer tick</name>
    <dbReference type="NCBI Taxonomy" id="6945"/>
    <lineage>
        <taxon>Eukaryota</taxon>
        <taxon>Metazoa</taxon>
        <taxon>Ecdysozoa</taxon>
        <taxon>Arthropoda</taxon>
        <taxon>Chelicerata</taxon>
        <taxon>Arachnida</taxon>
        <taxon>Acari</taxon>
        <taxon>Parasitiformes</taxon>
        <taxon>Ixodida</taxon>
        <taxon>Ixodoidea</taxon>
        <taxon>Ixodidae</taxon>
        <taxon>Ixodinae</taxon>
        <taxon>Ixodes</taxon>
    </lineage>
</organism>
<dbReference type="EMBL" id="AY189148">
    <property type="protein sequence ID" value="AAO43095.1"/>
    <property type="molecule type" value="mRNA"/>
</dbReference>
<dbReference type="EMBL" id="AY640046">
    <property type="protein sequence ID" value="AAV33389.1"/>
    <property type="molecule type" value="Genomic_DNA"/>
</dbReference>
<dbReference type="InParanoid" id="Q5SDL7"/>
<dbReference type="Proteomes" id="UP000001555">
    <property type="component" value="Unplaced"/>
</dbReference>
<dbReference type="GO" id="GO:0005886">
    <property type="term" value="C:plasma membrane"/>
    <property type="evidence" value="ECO:0007669"/>
    <property type="project" value="UniProtKB-SubCell"/>
</dbReference>
<evidence type="ECO:0000305" key="1"/>